<evidence type="ECO:0000255" key="1">
    <source>
        <dbReference type="PROSITE-ProRule" id="PRU00106"/>
    </source>
</evidence>
<evidence type="ECO:0000256" key="2">
    <source>
        <dbReference type="SAM" id="MobiDB-lite"/>
    </source>
</evidence>
<evidence type="ECO:0000269" key="3">
    <source>
    </source>
</evidence>
<evidence type="ECO:0000269" key="4">
    <source>
    </source>
</evidence>
<evidence type="ECO:0000269" key="5">
    <source>
    </source>
</evidence>
<evidence type="ECO:0000269" key="6">
    <source>
    </source>
</evidence>
<evidence type="ECO:0000269" key="7">
    <source>
    </source>
</evidence>
<evidence type="ECO:0000269" key="8">
    <source>
    </source>
</evidence>
<evidence type="ECO:0000269" key="9">
    <source>
    </source>
</evidence>
<evidence type="ECO:0000269" key="10">
    <source>
    </source>
</evidence>
<evidence type="ECO:0000269" key="11">
    <source>
    </source>
</evidence>
<evidence type="ECO:0000269" key="12">
    <source>
    </source>
</evidence>
<evidence type="ECO:0000269" key="13">
    <source>
    </source>
</evidence>
<evidence type="ECO:0000269" key="14">
    <source>
    </source>
</evidence>
<evidence type="ECO:0000303" key="15">
    <source>
    </source>
</evidence>
<evidence type="ECO:0000303" key="16">
    <source>
    </source>
</evidence>
<evidence type="ECO:0000303" key="17">
    <source>
    </source>
</evidence>
<evidence type="ECO:0000305" key="18"/>
<evidence type="ECO:0000312" key="19">
    <source>
        <dbReference type="MGI" id="MGI:1347080"/>
    </source>
</evidence>
<evidence type="ECO:0007744" key="20">
    <source>
        <dbReference type="PDB" id="4JBJ"/>
    </source>
</evidence>
<evidence type="ECO:0007744" key="21">
    <source>
        <dbReference type="PDB" id="4JBK"/>
    </source>
</evidence>
<evidence type="ECO:0007744" key="22">
    <source>
        <dbReference type="PDB" id="4L5Q"/>
    </source>
</evidence>
<evidence type="ECO:0007744" key="23">
    <source>
        <dbReference type="PDB" id="4L5R"/>
    </source>
</evidence>
<evidence type="ECO:0007744" key="24">
    <source>
        <dbReference type="PDB" id="4L5S"/>
    </source>
</evidence>
<evidence type="ECO:0007744" key="25">
    <source>
        <dbReference type="PDB" id="4L5T"/>
    </source>
</evidence>
<evidence type="ECO:0007744" key="26">
    <source>
        <dbReference type="PDB" id="4LNQ"/>
    </source>
</evidence>
<evidence type="ECO:0007829" key="27">
    <source>
        <dbReference type="PDB" id="4L5R"/>
    </source>
</evidence>
<evidence type="ECO:0007829" key="28">
    <source>
        <dbReference type="PDB" id="4L5S"/>
    </source>
</evidence>
<evidence type="ECO:0007829" key="29">
    <source>
        <dbReference type="PDB" id="4L5T"/>
    </source>
</evidence>
<proteinExistence type="evidence at protein level"/>
<name>IFI2_MOUSE</name>
<organism>
    <name type="scientific">Mus musculus</name>
    <name type="common">Mouse</name>
    <dbReference type="NCBI Taxonomy" id="10090"/>
    <lineage>
        <taxon>Eukaryota</taxon>
        <taxon>Metazoa</taxon>
        <taxon>Chordata</taxon>
        <taxon>Craniata</taxon>
        <taxon>Vertebrata</taxon>
        <taxon>Euteleostomi</taxon>
        <taxon>Mammalia</taxon>
        <taxon>Eutheria</taxon>
        <taxon>Euarchontoglires</taxon>
        <taxon>Glires</taxon>
        <taxon>Rodentia</taxon>
        <taxon>Myomorpha</taxon>
        <taxon>Muroidea</taxon>
        <taxon>Muridae</taxon>
        <taxon>Murinae</taxon>
        <taxon>Mus</taxon>
        <taxon>Mus</taxon>
    </lineage>
</organism>
<feature type="chain" id="PRO_0000153719" description="Interferon-activable protein 202">
    <location>
        <begin position="1"/>
        <end position="445"/>
    </location>
</feature>
<feature type="domain" description="HIN-200 1" evidence="1">
    <location>
        <begin position="46"/>
        <end position="243"/>
    </location>
</feature>
<feature type="domain" description="HIN-200 2" evidence="1">
    <location>
        <begin position="244"/>
        <end position="441"/>
    </location>
</feature>
<feature type="region of interest" description="Disordered" evidence="2">
    <location>
        <begin position="1"/>
        <end position="57"/>
    </location>
</feature>
<feature type="region of interest" description="Required for homomultimerization" evidence="14">
    <location>
        <begin position="82"/>
        <end position="89"/>
    </location>
</feature>
<feature type="region of interest" description="Required for homomultimerization" evidence="14">
    <location>
        <begin position="281"/>
        <end position="288"/>
    </location>
</feature>
<feature type="compositionally biased region" description="Polar residues" evidence="2">
    <location>
        <begin position="1"/>
        <end position="27"/>
    </location>
</feature>
<feature type="compositionally biased region" description="Basic residues" evidence="2">
    <location>
        <begin position="42"/>
        <end position="51"/>
    </location>
</feature>
<feature type="site" description="Mediates interaction with TP53BP1" evidence="13">
    <location>
        <position position="84"/>
    </location>
</feature>
<feature type="site" description="Mediates interaction with TP53BP1" evidence="13">
    <location>
        <position position="283"/>
    </location>
</feature>
<feature type="mutagenesis site" description="Reduced DNA-binding. Strongly reduces affinity for DNA; when associated with A-53 and W-54." evidence="7 8">
    <original>K</original>
    <variation>A</variation>
    <location>
        <position position="48"/>
    </location>
</feature>
<feature type="mutagenesis site" description="Reduced DNA-binding. Strongly reduces affinity for DNA; when associated with A-48 and W-54." evidence="7 8">
    <original>K</original>
    <variation>A</variation>
    <location>
        <position position="53"/>
    </location>
</feature>
<feature type="mutagenesis site" description="Strongly reduces affinity for DNA; when associated with A-48 and A-53." evidence="7">
    <original>G</original>
    <variation>W</variation>
    <location>
        <position position="54"/>
    </location>
</feature>
<feature type="mutagenesis site" description="Strongly reduces affinity for DNA; when associated with A-79 and A-236." evidence="7">
    <original>K</original>
    <variation>A</variation>
    <location>
        <position position="76"/>
    </location>
</feature>
<feature type="mutagenesis site" description="Strongly reduces affinity for DNA; when associated with A-76 and A-236." evidence="7">
    <original>K</original>
    <variation>A</variation>
    <location>
        <position position="79"/>
    </location>
</feature>
<feature type="mutagenesis site" description="Loss of interaction with TP53BP1; when associated with F-283." evidence="13">
    <original>H</original>
    <variation>F</variation>
    <location>
        <position position="84"/>
    </location>
</feature>
<feature type="mutagenesis site" description="Abolished homomultimerization." evidence="14">
    <original>H</original>
    <variation>G</variation>
    <location>
        <position position="84"/>
    </location>
</feature>
<feature type="mutagenesis site" description="Does not affect DNA-binding." evidence="9">
    <original>R</original>
    <variation>E</variation>
    <location>
        <position position="150"/>
    </location>
</feature>
<feature type="mutagenesis site" description="Strongly reduces affinity for DNA; when associated with." evidence="7">
    <original>S</original>
    <variation>A</variation>
    <location>
        <position position="166"/>
    </location>
</feature>
<feature type="mutagenesis site" description="Reduced DNA-binding." evidence="9">
    <original>S</original>
    <variation>E</variation>
    <location>
        <position position="166"/>
    </location>
</feature>
<feature type="mutagenesis site" description="Abolished DNA-binding." evidence="9">
    <original>K</original>
    <variation>E</variation>
    <location>
        <position position="180"/>
    </location>
</feature>
<feature type="mutagenesis site" description="Strongly reduces affinity for DNA." evidence="7">
    <original>NDKS</original>
    <variation>ADAA</variation>
    <location>
        <begin position="182"/>
        <end position="185"/>
    </location>
</feature>
<feature type="mutagenesis site" description="Abolished DNA-binding." evidence="9">
    <original>N</original>
    <variation>E</variation>
    <location>
        <position position="182"/>
    </location>
</feature>
<feature type="mutagenesis site" description="Does not affect DNA-binding." evidence="9">
    <original>K</original>
    <variation>E</variation>
    <location>
        <position position="184"/>
    </location>
</feature>
<feature type="mutagenesis site" description="Abolished DNA-binding." evidence="9">
    <original>S</original>
    <variation>E</variation>
    <location>
        <position position="185"/>
    </location>
</feature>
<feature type="mutagenesis site" description="Strongly reduces affinity for DNA; when associated with A-189 and A-198." evidence="7">
    <original>T</original>
    <variation>A</variation>
    <location>
        <position position="187"/>
    </location>
</feature>
<feature type="mutagenesis site" description="Abolished DNA-binding." evidence="9">
    <original>T</original>
    <variation>E</variation>
    <location>
        <position position="187"/>
    </location>
</feature>
<feature type="mutagenesis site" description="Strongly reduces affinity for DNA; when associated with A-187 and A-198." evidence="7">
    <original>K</original>
    <variation>A</variation>
    <location>
        <position position="189"/>
    </location>
</feature>
<feature type="mutagenesis site" description="Strongly reduces affinity for DNA; when associated with A-187 and A-189." evidence="7">
    <original>K</original>
    <variation>A</variation>
    <location>
        <position position="198"/>
    </location>
</feature>
<feature type="mutagenesis site" description="Abolished DNA-binding." evidence="9">
    <original>K</original>
    <variation>E</variation>
    <location>
        <position position="198"/>
    </location>
</feature>
<feature type="mutagenesis site" description="Strongly reduces affinity for DNA." evidence="7">
    <original>HLR</original>
    <variation>ALA</variation>
    <location>
        <begin position="222"/>
        <end position="224"/>
    </location>
</feature>
<feature type="mutagenesis site" description="Abolished DNA-binding." evidence="9">
    <original>H</original>
    <variation>E</variation>
    <location>
        <position position="222"/>
    </location>
</feature>
<feature type="mutagenesis site" description="Abolished DNA-binding." evidence="8 9">
    <original>R</original>
    <variation>E</variation>
    <location>
        <position position="224"/>
    </location>
</feature>
<feature type="mutagenesis site" description="Strongly reduces affinity for DNA; when associated with A-166; A-227 and A-229." evidence="7">
    <original>G</original>
    <variation>W</variation>
    <location>
        <position position="226"/>
    </location>
</feature>
<feature type="mutagenesis site" description="Strongly reduces affinity for DNA; when associated with A-166; W-226 and A-229." evidence="7">
    <original>N</original>
    <variation>A</variation>
    <location>
        <position position="227"/>
    </location>
</feature>
<feature type="mutagenesis site" description="Strongly reduces affinity for DNA; when associated with A-166; W-226 and A-227." evidence="7">
    <original>K</original>
    <variation>A</variation>
    <location>
        <position position="229"/>
    </location>
</feature>
<feature type="mutagenesis site" description="Does not affect DNA-binding. Strongly reduces affinity for DNA; when associated with A-76 and A-79." evidence="7 8">
    <original>N</original>
    <variation>A</variation>
    <location>
        <position position="236"/>
    </location>
</feature>
<feature type="mutagenesis site" description="Loss of interaction with TP53BP1; when associated with F-84." evidence="13">
    <original>H</original>
    <variation>F</variation>
    <location>
        <position position="283"/>
    </location>
</feature>
<feature type="mutagenesis site" description="Abolished homomultimerization." evidence="14">
    <original>H</original>
    <variation>G</variation>
    <location>
        <position position="283"/>
    </location>
</feature>
<feature type="mutagenesis site" description="Impaired homotetramerization." evidence="8">
    <original>Y</original>
    <variation>R</variation>
    <location>
        <position position="321"/>
    </location>
</feature>
<feature type="mutagenesis site" description="Promotes formation of a homodimer." evidence="8">
    <original>R</original>
    <variation>E</variation>
    <location>
        <position position="376"/>
    </location>
</feature>
<feature type="mutagenesis site" description="Impaired homotetramerization." evidence="8">
    <original>NN</original>
    <variation>AA</variation>
    <location>
        <begin position="381"/>
        <end position="382"/>
    </location>
</feature>
<feature type="mutagenesis site" description="Impaired homotetramerization." evidence="8">
    <original>K</original>
    <variation>A</variation>
    <location>
        <position position="396"/>
    </location>
</feature>
<feature type="mutagenesis site" description="Impaired homotetramerization." evidence="8">
    <original>E</original>
    <variation>A</variation>
    <location>
        <position position="420"/>
    </location>
</feature>
<feature type="mutagenesis site" description="Impaired homotetramerization." evidence="8">
    <original>N</original>
    <variation>A</variation>
    <location>
        <position position="424"/>
    </location>
</feature>
<feature type="mutagenesis site" description="Impaired homotetramerization." evidence="8">
    <original>R</original>
    <variation>A</variation>
    <location>
        <position position="431"/>
    </location>
</feature>
<feature type="mutagenesis site" description="Impaired homotetramerization." evidence="8">
    <original>RY</original>
    <variation>AA</variation>
    <location>
        <begin position="434"/>
        <end position="435"/>
    </location>
</feature>
<feature type="sequence conflict" description="In Ref. 2; AAF04260 and 5; AAH55888." evidence="18" ref="2 5">
    <original>EFS</original>
    <variation>DLA</variation>
    <location>
        <begin position="13"/>
        <end position="15"/>
    </location>
</feature>
<feature type="sequence conflict" description="In Ref. 3; ABB00055." evidence="18" ref="3">
    <original>K</original>
    <variation>N</variation>
    <location>
        <position position="79"/>
    </location>
</feature>
<feature type="sequence conflict" description="In Ref. 2; AAF04260 and 5; AAH18233." evidence="18" ref="2 5">
    <original>Q</original>
    <variation>K</variation>
    <location>
        <position position="92"/>
    </location>
</feature>
<feature type="sequence conflict" description="In Ref. 3; ABB00055." evidence="18" ref="3">
    <original>E</original>
    <variation>G</variation>
    <location>
        <position position="109"/>
    </location>
</feature>
<feature type="sequence conflict" description="In Ref. 5; AAH18233." evidence="18" ref="5">
    <original>K</original>
    <variation>Q</variation>
    <location>
        <position position="111"/>
    </location>
</feature>
<feature type="sequence conflict" description="In Ref. 3; ABB00055." evidence="18" ref="3">
    <original>I</original>
    <variation>F</variation>
    <location>
        <position position="127"/>
    </location>
</feature>
<feature type="sequence conflict" description="In Ref. 1; AAA39312, 2; AAF04260, 3; ABB00055 and 5; AAH18233/AAH55888." evidence="18" ref="1 2 3 5">
    <original>II</original>
    <variation>MF</variation>
    <location>
        <begin position="141"/>
        <end position="142"/>
    </location>
</feature>
<feature type="sequence conflict" description="In Ref. 3; ABB00055." evidence="18" ref="3">
    <original>T</original>
    <variation>I</variation>
    <location>
        <position position="187"/>
    </location>
</feature>
<feature type="sequence conflict" description="In Ref. 3; ABB00055." evidence="18" ref="3">
    <original>I</original>
    <variation>V</variation>
    <location>
        <position position="190"/>
    </location>
</feature>
<feature type="sequence conflict" description="In Ref. 1; AAA39312, 2; AAF04260, 3; ABB00055 and 5; AAH18233/AAH55888." evidence="18" ref="1 2 3 5">
    <original>K</original>
    <variation>E</variation>
    <location>
        <position position="204"/>
    </location>
</feature>
<feature type="sequence conflict" description="In Ref. 2; AAF04260." evidence="18" ref="2">
    <original>I</original>
    <variation>V</variation>
    <location>
        <position position="240"/>
    </location>
</feature>
<feature type="sequence conflict" description="In Ref. 1; AAA39312, 2; AAF04260, 3; ABB00055 and 5; AAH18233/AAH55888." evidence="18" ref="1 2 3 5">
    <original>L</original>
    <variation>P</variation>
    <location>
        <position position="350"/>
    </location>
</feature>
<feature type="sequence conflict" description="In Ref. 1; AAA39312, 2; AAF04260, 3; ABB00055 and 5; AAH18233/AAH55888." evidence="18" ref="1 2 3 5">
    <original>K</original>
    <variation>E</variation>
    <location>
        <position position="364"/>
    </location>
</feature>
<feature type="sequence conflict" description="In Ref. 1; AAA39312." evidence="18" ref="1">
    <original>V</original>
    <variation>F</variation>
    <location>
        <position position="368"/>
    </location>
</feature>
<feature type="sequence conflict" description="In Ref. 1; AAA39312, 2; AAF04260, 3; ABB00055 and 5; AAH18233/AAH55888." evidence="18" ref="1 2 3 5">
    <original>T</original>
    <variation>S</variation>
    <location>
        <position position="379"/>
    </location>
</feature>
<feature type="sequence conflict" description="In Ref. 1; AAA39312, 2; AAF04260, 3; ABB00055 and 5; AAH18233/AAH55888." evidence="18" ref="1 2 3 5">
    <original>S</original>
    <variation>A</variation>
    <location>
        <position position="432"/>
    </location>
</feature>
<feature type="turn" evidence="27">
    <location>
        <begin position="47"/>
        <end position="50"/>
    </location>
</feature>
<feature type="strand" evidence="27">
    <location>
        <begin position="56"/>
        <end position="58"/>
    </location>
</feature>
<feature type="strand" evidence="27">
    <location>
        <begin position="62"/>
        <end position="69"/>
    </location>
</feature>
<feature type="strand" evidence="27">
    <location>
        <begin position="73"/>
        <end position="75"/>
    </location>
</feature>
<feature type="turn" evidence="27">
    <location>
        <begin position="76"/>
        <end position="79"/>
    </location>
</feature>
<feature type="strand" evidence="27">
    <location>
        <begin position="80"/>
        <end position="88"/>
    </location>
</feature>
<feature type="strand" evidence="27">
    <location>
        <begin position="93"/>
        <end position="98"/>
    </location>
</feature>
<feature type="helix" evidence="27">
    <location>
        <begin position="101"/>
        <end position="106"/>
    </location>
</feature>
<feature type="strand" evidence="27">
    <location>
        <begin position="112"/>
        <end position="121"/>
    </location>
</feature>
<feature type="strand" evidence="27">
    <location>
        <begin position="124"/>
        <end position="127"/>
    </location>
</feature>
<feature type="strand" evidence="27">
    <location>
        <begin position="132"/>
        <end position="135"/>
    </location>
</feature>
<feature type="helix" evidence="27">
    <location>
        <begin position="138"/>
        <end position="140"/>
    </location>
</feature>
<feature type="helix" evidence="27">
    <location>
        <begin position="146"/>
        <end position="153"/>
    </location>
</feature>
<feature type="helix" evidence="27">
    <location>
        <begin position="158"/>
        <end position="161"/>
    </location>
</feature>
<feature type="strand" evidence="27">
    <location>
        <begin position="169"/>
        <end position="181"/>
    </location>
</feature>
<feature type="strand" evidence="27">
    <location>
        <begin position="186"/>
        <end position="191"/>
    </location>
</feature>
<feature type="strand" evidence="27">
    <location>
        <begin position="196"/>
        <end position="201"/>
    </location>
</feature>
<feature type="turn" evidence="28">
    <location>
        <begin position="211"/>
        <end position="213"/>
    </location>
</feature>
<feature type="strand" evidence="27">
    <location>
        <begin position="216"/>
        <end position="224"/>
    </location>
</feature>
<feature type="strand" evidence="27">
    <location>
        <begin position="226"/>
        <end position="228"/>
    </location>
</feature>
<feature type="strand" evidence="27">
    <location>
        <begin position="231"/>
        <end position="233"/>
    </location>
</feature>
<feature type="strand" evidence="27">
    <location>
        <begin position="239"/>
        <end position="242"/>
    </location>
</feature>
<feature type="strand" evidence="29">
    <location>
        <begin position="253"/>
        <end position="256"/>
    </location>
</feature>
<feature type="strand" evidence="29">
    <location>
        <begin position="260"/>
        <end position="267"/>
    </location>
</feature>
<feature type="strand" evidence="29">
    <location>
        <begin position="271"/>
        <end position="274"/>
    </location>
</feature>
<feature type="turn" evidence="29">
    <location>
        <begin position="275"/>
        <end position="278"/>
    </location>
</feature>
<feature type="strand" evidence="29">
    <location>
        <begin position="279"/>
        <end position="287"/>
    </location>
</feature>
<feature type="strand" evidence="29">
    <location>
        <begin position="289"/>
        <end position="297"/>
    </location>
</feature>
<feature type="helix" evidence="29">
    <location>
        <begin position="300"/>
        <end position="306"/>
    </location>
</feature>
<feature type="strand" evidence="29">
    <location>
        <begin position="311"/>
        <end position="314"/>
    </location>
</feature>
<feature type="strand" evidence="29">
    <location>
        <begin position="316"/>
        <end position="320"/>
    </location>
</feature>
<feature type="strand" evidence="29">
    <location>
        <begin position="323"/>
        <end position="326"/>
    </location>
</feature>
<feature type="helix" evidence="29">
    <location>
        <begin position="329"/>
        <end position="331"/>
    </location>
</feature>
<feature type="strand" evidence="29">
    <location>
        <begin position="332"/>
        <end position="334"/>
    </location>
</feature>
<feature type="helix" evidence="29">
    <location>
        <begin position="356"/>
        <end position="361"/>
    </location>
</feature>
<feature type="strand" evidence="29">
    <location>
        <begin position="368"/>
        <end position="379"/>
    </location>
</feature>
<feature type="strand" evidence="29">
    <location>
        <begin position="381"/>
        <end position="389"/>
    </location>
</feature>
<feature type="strand" evidence="29">
    <location>
        <begin position="395"/>
        <end position="399"/>
    </location>
</feature>
<feature type="helix" evidence="29">
    <location>
        <begin position="401"/>
        <end position="405"/>
    </location>
</feature>
<feature type="strand" evidence="29">
    <location>
        <begin position="413"/>
        <end position="422"/>
    </location>
</feature>
<feature type="strand" evidence="29">
    <location>
        <begin position="429"/>
        <end position="441"/>
    </location>
</feature>
<dbReference type="EMBL" id="M31418">
    <property type="protein sequence ID" value="AAA39312.1"/>
    <property type="molecule type" value="mRNA"/>
</dbReference>
<dbReference type="EMBL" id="AF140672">
    <property type="protein sequence ID" value="AAF04260.1"/>
    <property type="molecule type" value="mRNA"/>
</dbReference>
<dbReference type="EMBL" id="DQ222946">
    <property type="protein sequence ID" value="ABB00055.1"/>
    <property type="molecule type" value="mRNA"/>
</dbReference>
<dbReference type="EMBL" id="AC170584">
    <property type="status" value="NOT_ANNOTATED_CDS"/>
    <property type="molecule type" value="Genomic_DNA"/>
</dbReference>
<dbReference type="EMBL" id="BC018233">
    <property type="protein sequence ID" value="AAH18233.1"/>
    <property type="molecule type" value="mRNA"/>
</dbReference>
<dbReference type="EMBL" id="BC055888">
    <property type="protein sequence ID" value="AAH55888.1"/>
    <property type="molecule type" value="mRNA"/>
</dbReference>
<dbReference type="CCDS" id="CCDS35794.1"/>
<dbReference type="PIR" id="A34457">
    <property type="entry name" value="A34457"/>
</dbReference>
<dbReference type="RefSeq" id="NP_032353.2">
    <property type="nucleotide sequence ID" value="NM_008327.2"/>
</dbReference>
<dbReference type="RefSeq" id="NP_036070.2">
    <property type="nucleotide sequence ID" value="NM_011940.2"/>
</dbReference>
<dbReference type="RefSeq" id="XP_006536966.1">
    <property type="nucleotide sequence ID" value="XM_006536903.2"/>
</dbReference>
<dbReference type="PDB" id="4JBJ">
    <property type="method" value="X-ray"/>
    <property type="resolution" value="2.69 A"/>
    <property type="chains" value="A/B=46-242"/>
</dbReference>
<dbReference type="PDB" id="4JBK">
    <property type="method" value="X-ray"/>
    <property type="resolution" value="2.96 A"/>
    <property type="chains" value="A/B/C/D=46-242"/>
</dbReference>
<dbReference type="PDB" id="4L5Q">
    <property type="method" value="X-ray"/>
    <property type="resolution" value="2.23 A"/>
    <property type="chains" value="A=46-243"/>
</dbReference>
<dbReference type="PDB" id="4L5R">
    <property type="method" value="X-ray"/>
    <property type="resolution" value="1.87 A"/>
    <property type="chains" value="C=46-243"/>
</dbReference>
<dbReference type="PDB" id="4L5S">
    <property type="method" value="X-ray"/>
    <property type="resolution" value="2.94 A"/>
    <property type="chains" value="A/B=46-243"/>
</dbReference>
<dbReference type="PDB" id="4L5T">
    <property type="method" value="X-ray"/>
    <property type="resolution" value="3.40 A"/>
    <property type="chains" value="A/B/C/D=244-445"/>
</dbReference>
<dbReference type="PDB" id="4LNQ">
    <property type="method" value="X-ray"/>
    <property type="resolution" value="2.00 A"/>
    <property type="chains" value="A/B=53-245"/>
</dbReference>
<dbReference type="PDBsum" id="4JBJ"/>
<dbReference type="PDBsum" id="4JBK"/>
<dbReference type="PDBsum" id="4L5Q"/>
<dbReference type="PDBsum" id="4L5R"/>
<dbReference type="PDBsum" id="4L5S"/>
<dbReference type="PDBsum" id="4L5T"/>
<dbReference type="PDBsum" id="4LNQ"/>
<dbReference type="SMR" id="Q9R002"/>
<dbReference type="BioGRID" id="204945">
    <property type="interactions" value="4"/>
</dbReference>
<dbReference type="ELM" id="Q9R002"/>
<dbReference type="FunCoup" id="Q9R002">
    <property type="interactions" value="94"/>
</dbReference>
<dbReference type="IntAct" id="Q9R002">
    <property type="interactions" value="3"/>
</dbReference>
<dbReference type="STRING" id="10090.ENSMUSP00000000266"/>
<dbReference type="iPTMnet" id="Q9R002"/>
<dbReference type="PhosphoSitePlus" id="Q9R002"/>
<dbReference type="PaxDb" id="10090-ENSMUSP00000000266"/>
<dbReference type="ProteomicsDB" id="267198"/>
<dbReference type="Pumba" id="Q9R002"/>
<dbReference type="DNASU" id="26388"/>
<dbReference type="Ensembl" id="ENSMUST00000000266.9">
    <property type="protein sequence ID" value="ENSMUSP00000000266.8"/>
    <property type="gene ID" value="ENSMUSG00000026535.10"/>
</dbReference>
<dbReference type="GeneID" id="26388"/>
<dbReference type="KEGG" id="mmu:26388"/>
<dbReference type="UCSC" id="uc007dsk.2">
    <property type="organism name" value="mouse"/>
</dbReference>
<dbReference type="AGR" id="MGI:1347080"/>
<dbReference type="AGR" id="MGI:1347083"/>
<dbReference type="CTD" id="26388"/>
<dbReference type="MGI" id="MGI:1347080">
    <property type="gene designation" value="Ifi202a"/>
</dbReference>
<dbReference type="MGI" id="MGI:1347083">
    <property type="gene designation" value="Ifi202b"/>
</dbReference>
<dbReference type="VEuPathDB" id="HostDB:ENSMUSG00000026535"/>
<dbReference type="eggNOG" id="ENOG502QTQS">
    <property type="taxonomic scope" value="Eukaryota"/>
</dbReference>
<dbReference type="GeneTree" id="ENSGT00390000013296"/>
<dbReference type="HOGENOM" id="CLU_615313_0_0_1"/>
<dbReference type="InParanoid" id="Q9R002"/>
<dbReference type="OMA" id="YMETSLE"/>
<dbReference type="OrthoDB" id="9634829at2759"/>
<dbReference type="PhylomeDB" id="Q9R002"/>
<dbReference type="TreeFam" id="TF337385"/>
<dbReference type="BioGRID-ORCS" id="26388">
    <property type="hits" value="3 hits in 76 CRISPR screens"/>
</dbReference>
<dbReference type="ChiTaRS" id="Ifi202b">
    <property type="organism name" value="mouse"/>
</dbReference>
<dbReference type="EvolutionaryTrace" id="Q9R002"/>
<dbReference type="PRO" id="PR:Q9R002"/>
<dbReference type="Proteomes" id="UP000000589">
    <property type="component" value="Chromosome 1"/>
</dbReference>
<dbReference type="RNAct" id="Q9R002">
    <property type="molecule type" value="protein"/>
</dbReference>
<dbReference type="Bgee" id="ENSMUSG00000026535">
    <property type="expression patterns" value="Expressed in conjunctival fornix and 122 other cell types or tissues"/>
</dbReference>
<dbReference type="GO" id="GO:0005737">
    <property type="term" value="C:cytoplasm"/>
    <property type="evidence" value="ECO:0000314"/>
    <property type="project" value="UniProtKB"/>
</dbReference>
<dbReference type="GO" id="GO:0005634">
    <property type="term" value="C:nucleus"/>
    <property type="evidence" value="ECO:0000314"/>
    <property type="project" value="UniProtKB"/>
</dbReference>
<dbReference type="GO" id="GO:0003690">
    <property type="term" value="F:double-stranded DNA binding"/>
    <property type="evidence" value="ECO:0000314"/>
    <property type="project" value="UniProtKB"/>
</dbReference>
<dbReference type="GO" id="GO:0060090">
    <property type="term" value="F:molecular adaptor activity"/>
    <property type="evidence" value="ECO:0000314"/>
    <property type="project" value="UniProt"/>
</dbReference>
<dbReference type="GO" id="GO:0002218">
    <property type="term" value="P:activation of innate immune response"/>
    <property type="evidence" value="ECO:0007669"/>
    <property type="project" value="InterPro"/>
</dbReference>
<dbReference type="GO" id="GO:0035458">
    <property type="term" value="P:cellular response to interferon-beta"/>
    <property type="evidence" value="ECO:0000314"/>
    <property type="project" value="MGI"/>
</dbReference>
<dbReference type="GO" id="GO:0006954">
    <property type="term" value="P:inflammatory response"/>
    <property type="evidence" value="ECO:0007669"/>
    <property type="project" value="UniProtKB-KW"/>
</dbReference>
<dbReference type="GO" id="GO:0045087">
    <property type="term" value="P:innate immune response"/>
    <property type="evidence" value="ECO:0007669"/>
    <property type="project" value="UniProtKB-KW"/>
</dbReference>
<dbReference type="GO" id="GO:0140972">
    <property type="term" value="P:negative regulation of AIM2 inflammasome complex assembly"/>
    <property type="evidence" value="ECO:0000314"/>
    <property type="project" value="UniProtKB"/>
</dbReference>
<dbReference type="GO" id="GO:0045824">
    <property type="term" value="P:negative regulation of innate immune response"/>
    <property type="evidence" value="ECO:0000314"/>
    <property type="project" value="UniProtKB"/>
</dbReference>
<dbReference type="GO" id="GO:0051260">
    <property type="term" value="P:protein homooligomerization"/>
    <property type="evidence" value="ECO:0000314"/>
    <property type="project" value="UniProtKB"/>
</dbReference>
<dbReference type="GO" id="GO:0051289">
    <property type="term" value="P:protein homotetramerization"/>
    <property type="evidence" value="ECO:0000314"/>
    <property type="project" value="UniProtKB"/>
</dbReference>
<dbReference type="FunFam" id="2.40.50.140:FF:000500">
    <property type="entry name" value="Interferon-activable protein 202"/>
    <property type="match status" value="1"/>
</dbReference>
<dbReference type="FunFam" id="2.40.50.140:FF:000101">
    <property type="entry name" value="Myeloid cell nuclear differentiation antigen"/>
    <property type="match status" value="1"/>
</dbReference>
<dbReference type="Gene3D" id="2.40.50.140">
    <property type="entry name" value="Nucleic acid-binding proteins"/>
    <property type="match status" value="4"/>
</dbReference>
<dbReference type="InterPro" id="IPR040205">
    <property type="entry name" value="HIN-200"/>
</dbReference>
<dbReference type="InterPro" id="IPR004021">
    <property type="entry name" value="HIN200/IF120x"/>
</dbReference>
<dbReference type="InterPro" id="IPR012340">
    <property type="entry name" value="NA-bd_OB-fold"/>
</dbReference>
<dbReference type="PANTHER" id="PTHR12200">
    <property type="entry name" value="INTERFERON-INDUCIBLE PROTEIN AIM2 FAMILY MEMBER"/>
    <property type="match status" value="1"/>
</dbReference>
<dbReference type="PANTHER" id="PTHR12200:SF25">
    <property type="entry name" value="PYRIN AND HIN DOMAIN-CONTAINING PROTEIN 1"/>
    <property type="match status" value="1"/>
</dbReference>
<dbReference type="Pfam" id="PF02760">
    <property type="entry name" value="HIN"/>
    <property type="match status" value="2"/>
</dbReference>
<dbReference type="SUPFAM" id="SSF159141">
    <property type="entry name" value="HIN-2000 domain-like"/>
    <property type="match status" value="4"/>
</dbReference>
<dbReference type="PROSITE" id="PS50834">
    <property type="entry name" value="HIN_200"/>
    <property type="match status" value="2"/>
</dbReference>
<protein>
    <recommendedName>
        <fullName evidence="15">Interferon-activable protein 202</fullName>
        <shortName evidence="15">Ifi-202</shortName>
    </recommendedName>
    <alternativeName>
        <fullName evidence="17">Interferon-inducible protein p202</fullName>
    </alternativeName>
    <alternativeName>
        <fullName evidence="16">Lupus susceptibility protein p202</fullName>
    </alternativeName>
</protein>
<sequence>MSNRNLRSSTNSEFSEGQHQTPSSDSSGHGEDQPQASPGPNKKSHTPKKNISKGAVLHEKPMTVMVLTATEPFNYKEGKENMFHATVATESQYYRVKVFNMDLKEKFTENKFITISKYFNSSGILEINETATVSEAAPNQIIEVPKNIIRSAKETLKISKIKELDSGTLIYGVFAVEKKKVNDKSITFKIKDNEDNIKVVWDKKQHNINYEKGDKLQLFSFHLRKGNGKPILHSGNHSFIKGEKLLKESFEGDGYHKGPKQVVALKATKLFTYDSIKSKKMFHATVATDTEFFRVMVFEENLEKKFIPGNTIALSDYFGMYGSLAIHEYSSVSEVKSQNKEDSSSSDERLIEHLKICDLHLQTKERLVDGEFKVYRKSTGNNCICYGIWDDTGAMKVVVSGQLTSVNCEIGNTIRLVCFELTSNADEWFLRSTRYSYMEVIMPEK</sequence>
<accession>Q9R002</accession>
<accession>E9QLD9</accession>
<accession>P15091</accession>
<accession>Q38JF1</accession>
<accession>Q7TMN6</accession>
<accession>Q8VEL7</accession>
<comment type="function">
    <text evidence="5 6 7 8 9 12">DNA-binding protein involved in innate immune response and has anti-inflammatory activity (PubMed:19131592, PubMed:23567559, PubMed:23850291). Inhibits caspase activation in response to cytosolic DNA by preventing activation of the AIM2 inflammasome, probably by sequestering cytoplasmic DNA and preventing its being bound by AIM2 (PubMed:19131592, PubMed:23567559, PubMed:23850291). Also inhibits activation of the AIM2 inflammasome via a direct interaction with AIM2, which prevents the interaction between AIM2 and PYCARD and formation of the AIM2 inflammasome (PubMed:23850291). Binds double-stranded DNA (dsDNA) in the cytosol (PubMed:19131592, PubMed:23567559, PubMed:23850291, PubMed:24419611). Has anti-apoptotic effects due to inhibition of the transcriptional activity of TP53/p53 (PubMed:16670293). Inhibits the transcriptional activity of several transcription factors, including NF-kappa-B p50 and p65, FOS, JUN, E2F1, E2F4, MYOD1 and myogenin (PubMed:8524315).</text>
</comment>
<comment type="subunit">
    <text evidence="5 8 12 13 14">Homomultimer; homotetramerizes (via HIN-200 domain 2), enhancing affinity for double-stranded DNA (dsDNA) (PubMed:23850291, PubMed:9821952). Interacts (via HIN-200 domain 2) with AIM2 (via HIN-200 domain); preventing activation of the AIM2 inflammasome (PubMed:23850291). Binds to several transcription factors, including NF-kappa-B p50 (NFKB1) and p65 (RELA), FOS, JUN, E2F1, E2F4, MYOD1 and myogenin (PubMed:8524315). Also binds TP53/p53, the hypophosphorylated, growth-inhibitory form of the retinoblastoma protein and the p53-binding protein 1 (TP53BP1) (PubMed:16670293, PubMed:8910340).</text>
</comment>
<comment type="interaction">
    <interactant intactId="EBI-3043899">
        <id>Q9R002</id>
    </interactant>
    <interactant intactId="EBI-971782">
        <id>P13405</id>
        <label>Rb1</label>
    </interactant>
    <organismsDiffer>false</organismsDiffer>
    <experiments>7</experiments>
</comment>
<comment type="interaction">
    <interactant intactId="EBI-3043899">
        <id>Q9R002</id>
    </interactant>
    <interactant intactId="EBI-491274">
        <id>P06400</id>
        <label>RB1</label>
    </interactant>
    <organismsDiffer>true</organismsDiffer>
    <experiments>5</experiments>
</comment>
<comment type="subcellular location">
    <subcellularLocation>
        <location evidence="6 11">Cytoplasm</location>
    </subcellularLocation>
    <subcellularLocation>
        <location evidence="11">Nucleus</location>
    </subcellularLocation>
    <text evidence="11">Accumulates first in the cytoplasm, and is translocated to the nucleus after a delay, where it is primarily chromatin-associated.</text>
</comment>
<comment type="induction">
    <text evidence="4 10">By beta interferon (PubMed:14764608, PubMed:2477366). By IL6 in splenocytes (at protein level) (PubMed:14764608).</text>
</comment>
<comment type="domain">
    <text evidence="7 8 9">The HIN-200 domain 1 mediates non-specific double-stranded DNA (dsDNA)-binding via electrostatic interactions: it recognizes both strands of DNA (PubMed:23567559, PubMed:24419611). The HIN-200 domain 2 mediates homotetramerization and interaction with AIM2 (PubMed:23850291).</text>
</comment>
<comment type="PTM">
    <text evidence="11">Phosphorylated.</text>
</comment>
<comment type="polymorphism">
    <text evidence="3">NZB mice express 10 to 100 fold more Ifi202 in spleen than B6 or NZW mice (PubMed:11567633). This could account for the high susceptibility of NZB mice to systemic lupus (PubMed:11567633).</text>
</comment>
<comment type="similarity">
    <text evidence="18">Belongs to the HIN-200 family.</text>
</comment>
<keyword id="KW-0002">3D-structure</keyword>
<keyword id="KW-0963">Cytoplasm</keyword>
<keyword id="KW-0238">DNA-binding</keyword>
<keyword id="KW-0391">Immunity</keyword>
<keyword id="KW-0395">Inflammatory response</keyword>
<keyword id="KW-0399">Innate immunity</keyword>
<keyword id="KW-0539">Nucleus</keyword>
<keyword id="KW-0597">Phosphoprotein</keyword>
<keyword id="KW-1185">Reference proteome</keyword>
<keyword id="KW-0677">Repeat</keyword>
<gene>
    <name evidence="19" type="primary">Ifi202</name>
    <name evidence="15" type="synonym">Ifi202a</name>
    <name evidence="15" type="synonym">Ifi202b</name>
</gene>
<reference key="1">
    <citation type="journal article" date="1989" name="J. Biol. Chem.">
        <title>Interferons as gene activators. Indications for repeated gene duplication during the evolution of a cluster of interferon-activatable genes on murine chromosome 1.</title>
        <authorList>
            <person name="Choubey D."/>
            <person name="Snoddy J."/>
            <person name="Chaturvedi V."/>
            <person name="Toniato E."/>
            <person name="Opdenakker G."/>
            <person name="Thakur A."/>
            <person name="Samanta H."/>
            <person name="Engel D.A."/>
            <person name="Lengyel P."/>
        </authorList>
    </citation>
    <scope>NUCLEOTIDE SEQUENCE [MRNA]</scope>
    <scope>INDUCTION</scope>
    <source>
        <strain>AKR/J</strain>
    </source>
</reference>
<reference key="2">
    <citation type="journal article" date="1999" name="Genomics">
        <title>Characteristics of three homologous 202 genes (Ifi202a, ifi202b, and ifi202c) from the murine interferon-activatable gene 200 cluster.</title>
        <authorList>
            <person name="Wang H."/>
            <person name="Chatterjee G."/>
            <person name="Meyer J.J."/>
            <person name="Liu C.J."/>
            <person name="Manjunath N.A."/>
            <person name="Bray-Ward P."/>
            <person name="Lengyel P."/>
        </authorList>
    </citation>
    <scope>NUCLEOTIDE SEQUENCE [MRNA]</scope>
    <source>
        <strain>129/Sv</strain>
    </source>
</reference>
<reference key="3">
    <citation type="submission" date="2005-09" db="EMBL/GenBank/DDBJ databases">
        <title>Coding cDNA sequence for p202 in New Zealand Black mice.</title>
        <authorList>
            <person name="Chen J."/>
            <person name="Choubey D."/>
        </authorList>
    </citation>
    <scope>NUCLEOTIDE SEQUENCE [MRNA]</scope>
    <source>
        <strain>NZB</strain>
    </source>
</reference>
<reference key="4">
    <citation type="journal article" date="2009" name="PLoS Biol.">
        <title>Lineage-specific biology revealed by a finished genome assembly of the mouse.</title>
        <authorList>
            <person name="Church D.M."/>
            <person name="Goodstadt L."/>
            <person name="Hillier L.W."/>
            <person name="Zody M.C."/>
            <person name="Goldstein S."/>
            <person name="She X."/>
            <person name="Bult C.J."/>
            <person name="Agarwala R."/>
            <person name="Cherry J.L."/>
            <person name="DiCuccio M."/>
            <person name="Hlavina W."/>
            <person name="Kapustin Y."/>
            <person name="Meric P."/>
            <person name="Maglott D."/>
            <person name="Birtle Z."/>
            <person name="Marques A.C."/>
            <person name="Graves T."/>
            <person name="Zhou S."/>
            <person name="Teague B."/>
            <person name="Potamousis K."/>
            <person name="Churas C."/>
            <person name="Place M."/>
            <person name="Herschleb J."/>
            <person name="Runnheim R."/>
            <person name="Forrest D."/>
            <person name="Amos-Landgraf J."/>
            <person name="Schwartz D.C."/>
            <person name="Cheng Z."/>
            <person name="Lindblad-Toh K."/>
            <person name="Eichler E.E."/>
            <person name="Ponting C.P."/>
        </authorList>
    </citation>
    <scope>NUCLEOTIDE SEQUENCE [LARGE SCALE GENOMIC DNA]</scope>
    <source>
        <strain>C57BL/6J</strain>
    </source>
</reference>
<reference key="5">
    <citation type="journal article" date="2004" name="Genome Res.">
        <title>The status, quality, and expansion of the NIH full-length cDNA project: the Mammalian Gene Collection (MGC).</title>
        <authorList>
            <consortium name="The MGC Project Team"/>
        </authorList>
    </citation>
    <scope>NUCLEOTIDE SEQUENCE [LARGE SCALE MRNA]</scope>
    <source>
        <strain>Czech II</strain>
        <strain>FVB/N</strain>
        <tissue>Mammary tumor</tissue>
    </source>
</reference>
<reference key="6">
    <citation type="journal article" date="1993" name="J. Interferon Res.">
        <title>Interferon action: cytoplasmic and nuclear localization of the interferon-inducible 52-kD protein that is encoded by the Ifi 200 gene from the gene 200 cluster.</title>
        <authorList>
            <person name="Choubey D."/>
            <person name="Lengyel P."/>
        </authorList>
    </citation>
    <scope>FUNCTION</scope>
    <scope>SUBCELLULAR LOCATION</scope>
    <scope>PHOSPHORYLATION</scope>
</reference>
<reference key="7">
    <citation type="journal article" date="1996" name="J. Biol. Chem.">
        <title>p202, an interferon-inducible modulator of transcription, inhibits transcriptional activation by the p53 tumor suppressor protein, and a segment from the p53-binding protein 1 that binds to p202 overcomes this inhibition.</title>
        <authorList>
            <person name="Datta B."/>
            <person name="Li B."/>
            <person name="Choubey D."/>
            <person name="Nallur G."/>
            <person name="Lengyel P."/>
        </authorList>
    </citation>
    <scope>FUNCTION</scope>
    <scope>INTERACTION WITH TP53BP1</scope>
    <scope>MUTAGENESIS OF HIS-84 AND HIS-283</scope>
</reference>
<reference key="8">
    <citation type="journal article" date="1996" name="Mol. Cell. Biol.">
        <title>The interferon-inducible p202 protein as a modulator of transcription: inhibition of NF-kappa B, c-Fos, and c-Jun activities.</title>
        <authorList>
            <person name="Min W."/>
            <person name="Ghosh S."/>
            <person name="Lengyel P."/>
        </authorList>
    </citation>
    <scope>FUNCTION</scope>
    <scope>INTERACTION WITH NFKB1 AND RELA</scope>
</reference>
<reference key="9">
    <citation type="journal article" date="1998" name="FEBS Lett.">
        <title>p202 self-associates through a sequence conserved among the members of the 200-family proteins.</title>
        <authorList>
            <person name="Koul D."/>
            <person name="Obeyesekere N.U."/>
            <person name="Gutterman J.U."/>
            <person name="Mills G.B."/>
            <person name="Choubey D."/>
        </authorList>
    </citation>
    <scope>SUBUNIT</scope>
    <scope>MUTAGENESIS OF HIS-84 AND HIS-283</scope>
</reference>
<reference key="10">
    <citation type="journal article" date="2001" name="Immunity">
        <title>Evidence for an interferon-inducible gene, Ifi202, in the susceptibility to systemic lupus.</title>
        <authorList>
            <person name="Rozzo S.J."/>
            <person name="Allard J.D."/>
            <person name="Choubey D."/>
            <person name="Vyse T.J."/>
            <person name="Izui S."/>
            <person name="Peltz G."/>
            <person name="Kotzin B.L."/>
        </authorList>
    </citation>
    <scope>POLYMORPHISM</scope>
</reference>
<reference key="11">
    <citation type="journal article" date="2004" name="J. Biol. Chem.">
        <title>Interleukin-6 induces expression of Ifi202, an interferon-inducible candidate gene for lupus susceptibility.</title>
        <authorList>
            <person name="Pramanik R."/>
            <person name="Jorgensen T.N."/>
            <person name="Xin H."/>
            <person name="Kotzin B.L."/>
            <person name="Choubey D."/>
        </authorList>
    </citation>
    <scope>INDUCTION BY IL6</scope>
</reference>
<reference key="12">
    <citation type="journal article" date="2006" name="J. Immunol.">
        <title>Increased expression of Ifi202, an IFN-activatable gene, in B6.Nba2 lupus susceptible mice inhibits p53-mediated apoptosis.</title>
        <authorList>
            <person name="Xin H."/>
            <person name="D'Souza S."/>
            <person name="Jorgensen T.N."/>
            <person name="Vaughan A.T."/>
            <person name="Lengyel P."/>
            <person name="Kotzin B.L."/>
            <person name="Choubey D."/>
        </authorList>
    </citation>
    <scope>FUNCTION</scope>
    <scope>INTERACTION WITH TP53</scope>
</reference>
<reference key="13">
    <citation type="journal article" date="2009" name="Science">
        <title>HIN-200 proteins regulate caspase activation in response to foreign cytoplasmic DNA.</title>
        <authorList>
            <person name="Roberts T.L."/>
            <person name="Idris A."/>
            <person name="Dunn J.A."/>
            <person name="Kelly G.M."/>
            <person name="Burnton C.M."/>
            <person name="Hodgson S."/>
            <person name="Hardy L.L."/>
            <person name="Garceau V."/>
            <person name="Sweet M.J."/>
            <person name="Ross I.L."/>
            <person name="Hume D.A."/>
            <person name="Stacey K.J."/>
        </authorList>
    </citation>
    <scope>FUNCTION</scope>
    <scope>SUBCELLULAR LOCATION</scope>
    <scope>IDENTIFICATION BY MASS SPECTROMETRY</scope>
</reference>
<reference evidence="22 23 24 25" key="14">
    <citation type="journal article" date="2013" name="Cell Rep.">
        <title>Molecular mechanism for p202-mediated specific inhibition of AIM2 inflammasome activation.</title>
        <authorList>
            <person name="Yin Q."/>
            <person name="Sester D.P."/>
            <person name="Tian Y."/>
            <person name="Hsiao Y.S."/>
            <person name="Lu A."/>
            <person name="Cridland J.A."/>
            <person name="Sagulenko V."/>
            <person name="Thygesen S.J."/>
            <person name="Choubey D."/>
            <person name="Hornung V."/>
            <person name="Walz T."/>
            <person name="Stacey K.J."/>
            <person name="Wu H."/>
        </authorList>
    </citation>
    <scope>X-RAY CRYSTALLOGRAPHY (1.87 ANGSTROMS) OF 46-243 IN COMPLEX WITH DNA</scope>
    <scope>FUNCTION</scope>
    <scope>SUBUNIT</scope>
    <scope>DOMAIN</scope>
    <scope>INTERACTION WITH AIM2</scope>
    <scope>MUTAGENESIS OF LYS-48; LYS-53; ARG-224; ASN-236; TYR-321; ARG-376; 381-ASN-ASN-382; LYS-396; GLU-420; ASN-424; ARG-431 AND 434-ARG-TYR-435</scope>
</reference>
<reference evidence="20 21" key="15">
    <citation type="journal article" date="2013" name="Cell Res.">
        <title>Structural basis for termination of AIM2-mediated signaling by p202.</title>
        <authorList>
            <person name="Ru H."/>
            <person name="Ni X."/>
            <person name="Zhao L."/>
            <person name="Crowley C."/>
            <person name="Ding W."/>
            <person name="Hung L.W."/>
            <person name="Shaw N."/>
            <person name="Cheng G."/>
            <person name="Liu Z.J."/>
        </authorList>
    </citation>
    <scope>X-RAY CRYSTALLOGRAPHY (2.69 ANGSTROMS) OF 46-242 IN COMPLEX WITH DNA</scope>
    <scope>FUNCTION</scope>
    <scope>DOMAIN</scope>
    <scope>MUTAGENESIS OF LYS-48; LYS-53; GLY-54; LYS-76; LYS-79; SER-166; 182-ASN--SER-185; THR-187; LYS-189; LYS-198; 222-HIS--ARG-224; GLY-226; ASN-227; LYS-229 AND ASN-236</scope>
    <scope>DNA BINDING</scope>
</reference>
<reference evidence="26" key="16">
    <citation type="journal article" date="2014" name="Acta Crystallogr. F Struct. Biol. Commun.">
        <title>Structural mechanism of DNA recognition by the p202 HINa domain: insights into the inhibition of Aim2-mediated inflammatory signalling.</title>
        <authorList>
            <person name="Li H."/>
            <person name="Wang J."/>
            <person name="Wang J."/>
            <person name="Cao L.S."/>
            <person name="Wang Z.X."/>
            <person name="Wu J.W."/>
        </authorList>
    </citation>
    <scope>X-RAY CRYSTALLOGRAPHY (2.00 ANGSTROMS) OF 53-245 IN COMPLEX WITH DNA</scope>
    <scope>FUNCTION</scope>
    <scope>DOMAIN</scope>
    <scope>MUTAGENESIS OF ARG-150; SER-166; LYS-180; ASN-182; LYS-184; SER-185; THR-187; LYS-198; HIS-222 AND ARG-224</scope>
</reference>